<organism>
    <name type="scientific">Cyanophora paradoxa</name>
    <dbReference type="NCBI Taxonomy" id="2762"/>
    <lineage>
        <taxon>Eukaryota</taxon>
        <taxon>Glaucocystophyceae</taxon>
        <taxon>Cyanophoraceae</taxon>
        <taxon>Cyanophora</taxon>
    </lineage>
</organism>
<dbReference type="EMBL" id="U30821">
    <property type="protein sequence ID" value="AAA81267.1"/>
    <property type="molecule type" value="Genomic_DNA"/>
</dbReference>
<dbReference type="PIR" id="T06924">
    <property type="entry name" value="T06924"/>
</dbReference>
<dbReference type="RefSeq" id="NP_043236.1">
    <property type="nucleotide sequence ID" value="NC_001675.1"/>
</dbReference>
<dbReference type="SMR" id="P48106"/>
<dbReference type="GeneID" id="801515"/>
<dbReference type="GO" id="GO:0033115">
    <property type="term" value="C:cyanelle thylakoid membrane"/>
    <property type="evidence" value="ECO:0007669"/>
    <property type="project" value="UniProtKB-SubCell"/>
</dbReference>
<dbReference type="GO" id="GO:0009539">
    <property type="term" value="C:photosystem II reaction center"/>
    <property type="evidence" value="ECO:0007669"/>
    <property type="project" value="InterPro"/>
</dbReference>
<dbReference type="GO" id="GO:0015979">
    <property type="term" value="P:photosynthesis"/>
    <property type="evidence" value="ECO:0007669"/>
    <property type="project" value="UniProtKB-UniRule"/>
</dbReference>
<dbReference type="HAMAP" id="MF_01316">
    <property type="entry name" value="PSII_PsbI"/>
    <property type="match status" value="1"/>
</dbReference>
<dbReference type="InterPro" id="IPR003686">
    <property type="entry name" value="PSII_PsbI"/>
</dbReference>
<dbReference type="InterPro" id="IPR037271">
    <property type="entry name" value="PSII_PsbI_sf"/>
</dbReference>
<dbReference type="NCBIfam" id="NF002735">
    <property type="entry name" value="PRK02655.1"/>
    <property type="match status" value="1"/>
</dbReference>
<dbReference type="PANTHER" id="PTHR35772">
    <property type="entry name" value="PHOTOSYSTEM II REACTION CENTER PROTEIN I"/>
    <property type="match status" value="1"/>
</dbReference>
<dbReference type="PANTHER" id="PTHR35772:SF1">
    <property type="entry name" value="PHOTOSYSTEM II REACTION CENTER PROTEIN I"/>
    <property type="match status" value="1"/>
</dbReference>
<dbReference type="Pfam" id="PF02532">
    <property type="entry name" value="PsbI"/>
    <property type="match status" value="1"/>
</dbReference>
<dbReference type="SUPFAM" id="SSF161041">
    <property type="entry name" value="Photosystem II reaction center protein I, PsbI"/>
    <property type="match status" value="1"/>
</dbReference>
<geneLocation type="cyanelle"/>
<gene>
    <name evidence="1" type="primary">psbI</name>
</gene>
<keyword id="KW-0194">Cyanelle</keyword>
<keyword id="KW-0472">Membrane</keyword>
<keyword id="KW-0602">Photosynthesis</keyword>
<keyword id="KW-0604">Photosystem II</keyword>
<keyword id="KW-0934">Plastid</keyword>
<keyword id="KW-0674">Reaction center</keyword>
<keyword id="KW-0793">Thylakoid</keyword>
<keyword id="KW-0812">Transmembrane</keyword>
<keyword id="KW-1133">Transmembrane helix</keyword>
<evidence type="ECO:0000255" key="1">
    <source>
        <dbReference type="HAMAP-Rule" id="MF_01316"/>
    </source>
</evidence>
<accession>P48106</accession>
<comment type="function">
    <text evidence="1">One of the components of the core complex of photosystem II (PSII), required for its stability and/or assembly. PSII is a light-driven water:plastoquinone oxidoreductase that uses light energy to abstract electrons from H(2)O, generating O(2) and a proton gradient subsequently used for ATP formation. It consists of a core antenna complex that captures photons, and an electron transfer chain that converts photonic excitation into a charge separation.</text>
</comment>
<comment type="subunit">
    <text evidence="1">PSII is composed of 1 copy each of membrane proteins PsbA, PsbB, PsbC, PsbD, PsbE, PsbF, PsbH, PsbI, PsbJ, PsbK, PsbL, PsbM, PsbT, PsbX, PsbY, PsbZ, Psb30/Ycf12, at least 3 peripheral proteins of the oxygen-evolving complex and a large number of cofactors. It forms dimeric complexes.</text>
</comment>
<comment type="subcellular location">
    <subcellularLocation>
        <location evidence="1">Plastid</location>
        <location evidence="1">Cyanelle thylakoid membrane</location>
        <topology evidence="1">Single-pass membrane protein</topology>
    </subcellularLocation>
</comment>
<comment type="similarity">
    <text evidence="1">Belongs to the PsbI family.</text>
</comment>
<feature type="chain" id="PRO_0000219625" description="Photosystem II reaction center protein I">
    <location>
        <begin position="1"/>
        <end position="38"/>
    </location>
</feature>
<feature type="transmembrane region" description="Helical" evidence="1">
    <location>
        <begin position="4"/>
        <end position="24"/>
    </location>
</feature>
<protein>
    <recommendedName>
        <fullName evidence="1">Photosystem II reaction center protein I</fullName>
        <shortName evidence="1">PSII-I</shortName>
    </recommendedName>
    <alternativeName>
        <fullName evidence="1">PSII 4.8 kDa protein</fullName>
    </alternativeName>
</protein>
<reference key="1">
    <citation type="journal article" date="1995" name="Plant Mol. Biol. Rep.">
        <title>Nucleotide sequence of the cyanelle DNA from Cyanophora paradoxa.</title>
        <authorList>
            <person name="Stirewalt V.L."/>
            <person name="Michalowski C.B."/>
            <person name="Loeffelhardt W."/>
            <person name="Bohnert H.J."/>
            <person name="Bryant D.A."/>
        </authorList>
    </citation>
    <scope>NUCLEOTIDE SEQUENCE [LARGE SCALE GENOMIC DNA]</scope>
    <source>
        <strain>UTEX LB 555 / Pringsheim</strain>
    </source>
</reference>
<reference key="2">
    <citation type="book" date="1997" name="Eukaryotism and symbiosis">
        <title>The complete sequence of the cyanelle genome of Cyanophora paradoxa: the genetic complexity of a primitive plastid.</title>
        <editorList>
            <person name="Schenk H.E.A."/>
            <person name="Herrmann R."/>
            <person name="Jeon K.W."/>
            <person name="Mueller N.E."/>
            <person name="Schwemmler W."/>
        </editorList>
        <authorList>
            <person name="Loeffelhardt W."/>
            <person name="Stirewalt V.L."/>
            <person name="Michalowski C.B."/>
            <person name="Annarella M."/>
            <person name="Farley J.Y."/>
            <person name="Schluchter W.M."/>
            <person name="Chung S."/>
            <person name="Newmann-Spallart C."/>
            <person name="Steiner J.M."/>
            <person name="Jakowitsch J."/>
            <person name="Bohnert H.J."/>
            <person name="Bryant D.A."/>
        </authorList>
    </citation>
    <scope>NUCLEOTIDE SEQUENCE [LARGE SCALE GENOMIC DNA]</scope>
    <source>
        <strain>UTEX LB 555 / Pringsheim</strain>
    </source>
</reference>
<sequence length="38" mass="4432">MLTLKIVVYTVVIFFVSLFIFGFLSNDPARKPSRKDIR</sequence>
<proteinExistence type="inferred from homology"/>
<name>PSBI_CYAPA</name>